<protein>
    <recommendedName>
        <fullName evidence="1">DNA mismatch repair protein MutS</fullName>
    </recommendedName>
</protein>
<dbReference type="EMBL" id="AP008955">
    <property type="protein sequence ID" value="BAH44353.1"/>
    <property type="molecule type" value="Genomic_DNA"/>
</dbReference>
<dbReference type="RefSeq" id="WP_015891660.1">
    <property type="nucleotide sequence ID" value="NC_012491.1"/>
</dbReference>
<dbReference type="SMR" id="C0ZEZ4"/>
<dbReference type="STRING" id="358681.BBR47_33760"/>
<dbReference type="KEGG" id="bbe:BBR47_33760"/>
<dbReference type="eggNOG" id="COG0249">
    <property type="taxonomic scope" value="Bacteria"/>
</dbReference>
<dbReference type="HOGENOM" id="CLU_002472_1_3_9"/>
<dbReference type="Proteomes" id="UP000001877">
    <property type="component" value="Chromosome"/>
</dbReference>
<dbReference type="GO" id="GO:0005829">
    <property type="term" value="C:cytosol"/>
    <property type="evidence" value="ECO:0007669"/>
    <property type="project" value="TreeGrafter"/>
</dbReference>
<dbReference type="GO" id="GO:0005524">
    <property type="term" value="F:ATP binding"/>
    <property type="evidence" value="ECO:0007669"/>
    <property type="project" value="UniProtKB-UniRule"/>
</dbReference>
<dbReference type="GO" id="GO:0140664">
    <property type="term" value="F:ATP-dependent DNA damage sensor activity"/>
    <property type="evidence" value="ECO:0007669"/>
    <property type="project" value="InterPro"/>
</dbReference>
<dbReference type="GO" id="GO:0003684">
    <property type="term" value="F:damaged DNA binding"/>
    <property type="evidence" value="ECO:0007669"/>
    <property type="project" value="UniProtKB-UniRule"/>
</dbReference>
<dbReference type="GO" id="GO:0030983">
    <property type="term" value="F:mismatched DNA binding"/>
    <property type="evidence" value="ECO:0007669"/>
    <property type="project" value="InterPro"/>
</dbReference>
<dbReference type="GO" id="GO:0006298">
    <property type="term" value="P:mismatch repair"/>
    <property type="evidence" value="ECO:0007669"/>
    <property type="project" value="UniProtKB-UniRule"/>
</dbReference>
<dbReference type="CDD" id="cd03284">
    <property type="entry name" value="ABC_MutS1"/>
    <property type="match status" value="1"/>
</dbReference>
<dbReference type="FunFam" id="1.10.1420.10:FF:000007">
    <property type="entry name" value="DNA mismatch repair protein MutS"/>
    <property type="match status" value="1"/>
</dbReference>
<dbReference type="FunFam" id="3.40.1170.10:FF:000001">
    <property type="entry name" value="DNA mismatch repair protein MutS"/>
    <property type="match status" value="1"/>
</dbReference>
<dbReference type="FunFam" id="3.40.50.300:FF:000870">
    <property type="entry name" value="MutS protein homolog 4"/>
    <property type="match status" value="1"/>
</dbReference>
<dbReference type="Gene3D" id="1.10.1420.10">
    <property type="match status" value="2"/>
</dbReference>
<dbReference type="Gene3D" id="3.40.1170.10">
    <property type="entry name" value="DNA repair protein MutS, domain I"/>
    <property type="match status" value="1"/>
</dbReference>
<dbReference type="Gene3D" id="3.30.420.110">
    <property type="entry name" value="MutS, connector domain"/>
    <property type="match status" value="1"/>
</dbReference>
<dbReference type="Gene3D" id="3.40.50.300">
    <property type="entry name" value="P-loop containing nucleotide triphosphate hydrolases"/>
    <property type="match status" value="1"/>
</dbReference>
<dbReference type="HAMAP" id="MF_00096">
    <property type="entry name" value="MutS"/>
    <property type="match status" value="1"/>
</dbReference>
<dbReference type="InterPro" id="IPR005748">
    <property type="entry name" value="DNA_mismatch_repair_MutS"/>
</dbReference>
<dbReference type="InterPro" id="IPR007695">
    <property type="entry name" value="DNA_mismatch_repair_MutS-lik_N"/>
</dbReference>
<dbReference type="InterPro" id="IPR017261">
    <property type="entry name" value="DNA_mismatch_repair_MutS/MSH"/>
</dbReference>
<dbReference type="InterPro" id="IPR000432">
    <property type="entry name" value="DNA_mismatch_repair_MutS_C"/>
</dbReference>
<dbReference type="InterPro" id="IPR007861">
    <property type="entry name" value="DNA_mismatch_repair_MutS_clamp"/>
</dbReference>
<dbReference type="InterPro" id="IPR007696">
    <property type="entry name" value="DNA_mismatch_repair_MutS_core"/>
</dbReference>
<dbReference type="InterPro" id="IPR016151">
    <property type="entry name" value="DNA_mismatch_repair_MutS_N"/>
</dbReference>
<dbReference type="InterPro" id="IPR036187">
    <property type="entry name" value="DNA_mismatch_repair_MutS_sf"/>
</dbReference>
<dbReference type="InterPro" id="IPR007860">
    <property type="entry name" value="DNA_mmatch_repair_MutS_con_dom"/>
</dbReference>
<dbReference type="InterPro" id="IPR045076">
    <property type="entry name" value="MutS"/>
</dbReference>
<dbReference type="InterPro" id="IPR036678">
    <property type="entry name" value="MutS_con_dom_sf"/>
</dbReference>
<dbReference type="InterPro" id="IPR027417">
    <property type="entry name" value="P-loop_NTPase"/>
</dbReference>
<dbReference type="NCBIfam" id="TIGR01070">
    <property type="entry name" value="mutS1"/>
    <property type="match status" value="1"/>
</dbReference>
<dbReference type="NCBIfam" id="NF003810">
    <property type="entry name" value="PRK05399.1"/>
    <property type="match status" value="1"/>
</dbReference>
<dbReference type="PANTHER" id="PTHR11361:SF34">
    <property type="entry name" value="DNA MISMATCH REPAIR PROTEIN MSH1, MITOCHONDRIAL"/>
    <property type="match status" value="1"/>
</dbReference>
<dbReference type="PANTHER" id="PTHR11361">
    <property type="entry name" value="DNA MISMATCH REPAIR PROTEIN MUTS FAMILY MEMBER"/>
    <property type="match status" value="1"/>
</dbReference>
<dbReference type="Pfam" id="PF01624">
    <property type="entry name" value="MutS_I"/>
    <property type="match status" value="1"/>
</dbReference>
<dbReference type="Pfam" id="PF05188">
    <property type="entry name" value="MutS_II"/>
    <property type="match status" value="1"/>
</dbReference>
<dbReference type="Pfam" id="PF05192">
    <property type="entry name" value="MutS_III"/>
    <property type="match status" value="1"/>
</dbReference>
<dbReference type="Pfam" id="PF05190">
    <property type="entry name" value="MutS_IV"/>
    <property type="match status" value="1"/>
</dbReference>
<dbReference type="Pfam" id="PF00488">
    <property type="entry name" value="MutS_V"/>
    <property type="match status" value="1"/>
</dbReference>
<dbReference type="PIRSF" id="PIRSF037677">
    <property type="entry name" value="DNA_mis_repair_Msh6"/>
    <property type="match status" value="1"/>
</dbReference>
<dbReference type="SMART" id="SM00534">
    <property type="entry name" value="MUTSac"/>
    <property type="match status" value="1"/>
</dbReference>
<dbReference type="SMART" id="SM00533">
    <property type="entry name" value="MUTSd"/>
    <property type="match status" value="1"/>
</dbReference>
<dbReference type="SUPFAM" id="SSF55271">
    <property type="entry name" value="DNA repair protein MutS, domain I"/>
    <property type="match status" value="1"/>
</dbReference>
<dbReference type="SUPFAM" id="SSF53150">
    <property type="entry name" value="DNA repair protein MutS, domain II"/>
    <property type="match status" value="1"/>
</dbReference>
<dbReference type="SUPFAM" id="SSF48334">
    <property type="entry name" value="DNA repair protein MutS, domain III"/>
    <property type="match status" value="1"/>
</dbReference>
<dbReference type="SUPFAM" id="SSF52540">
    <property type="entry name" value="P-loop containing nucleoside triphosphate hydrolases"/>
    <property type="match status" value="1"/>
</dbReference>
<dbReference type="PROSITE" id="PS00486">
    <property type="entry name" value="DNA_MISMATCH_REPAIR_2"/>
    <property type="match status" value="1"/>
</dbReference>
<evidence type="ECO:0000255" key="1">
    <source>
        <dbReference type="HAMAP-Rule" id="MF_00096"/>
    </source>
</evidence>
<comment type="function">
    <text evidence="1">This protein is involved in the repair of mismatches in DNA. It is possible that it carries out the mismatch recognition step. This protein has a weak ATPase activity.</text>
</comment>
<comment type="similarity">
    <text evidence="1">Belongs to the DNA mismatch repair MutS family.</text>
</comment>
<sequence length="862" mass="96465">MAQYTPMIQQYLAIKKDYPDTFLFFRLGDFYELFFDDAILASRELEITLTGRDGGGSERIPMCGVPHHAADGYIAELLKKGHKVAVCEQVEDPKEAKGVVRREVTRVITPGTMMEGKWLTDKENNYMAALAQVEGRTGVAACDMSTGEMYVTSLAGQAESVLDEALQYRPKELVFFGLAALPKTALPSTVVDAHQLDVFAVDSQYAEQAKGLDVSMRAAVNALLFYIGTTQKRSLAHMRLLKQYDAKQYLQMDGFSRRNLELTETIRDKTKKGSLLWLLDRTQTAMGGRLLRRWIERPLLSRDQLEARLSAVEALKGDMLLRSDLRTCLDRVYDLERLAGRISYGNANARDLIQLRMSLEAVPELKQYMIQTNTPVLMELANGMDECADIVNYLAHALVDDPPISVREGGMIRTGYDEYLDKLHTASREGKTWIAQLEQGEREATGIRSLKVGFNKVFGYYIEISKSNIANVPAGRYERKQTLANAERYITPELKEREALILEAEEKMIELEYQLFVAVRSEVAKHIPRLQNLAERIASVDVLQAFATVSDERGFVRPELVESGDYVITEGRHPVVEAVLEREKYVANDVEMDQTNRQVLLITGPNMAGKSTYMRQIALITVMAQIGCFVPAKQAKLSIVDQIFTRIGAADDLVGGHSTFMVEMLETRHALQKATAKSLILLDEIGRGTSTYDGMALAQAVIEYICQKIGAKTLFSTHYHELTGLAETLSGVVNVNARCEEREGKLLFLHKIEEGRADKSYGIHVAELAEMPTWVIERARSILTGLEANGSTGNGNAASDVQMSLETLWTAPVAAVREEPMQFASAEEEAIMAELRELDLNSTTPMDAMMKLYAWKQQLKKR</sequence>
<name>MUTS_BREBN</name>
<accession>C0ZEZ4</accession>
<reference key="1">
    <citation type="submission" date="2005-03" db="EMBL/GenBank/DDBJ databases">
        <title>Brevibacillus brevis strain 47, complete genome.</title>
        <authorList>
            <person name="Hosoyama A."/>
            <person name="Yamada R."/>
            <person name="Hongo Y."/>
            <person name="Terui Y."/>
            <person name="Ankai A."/>
            <person name="Masuyama W."/>
            <person name="Sekiguchi M."/>
            <person name="Takeda T."/>
            <person name="Asano K."/>
            <person name="Ohji S."/>
            <person name="Ichikawa N."/>
            <person name="Narita S."/>
            <person name="Aoki N."/>
            <person name="Miura H."/>
            <person name="Matsushita S."/>
            <person name="Sekigawa T."/>
            <person name="Yamagata H."/>
            <person name="Yoshikawa H."/>
            <person name="Udaka S."/>
            <person name="Tanikawa S."/>
            <person name="Fujita N."/>
        </authorList>
    </citation>
    <scope>NUCLEOTIDE SEQUENCE [LARGE SCALE GENOMIC DNA]</scope>
    <source>
        <strain>47 / JCM 6285 / NBRC 100599</strain>
    </source>
</reference>
<gene>
    <name evidence="1" type="primary">mutS</name>
    <name type="ordered locus">BBR47_33760</name>
</gene>
<organism>
    <name type="scientific">Brevibacillus brevis (strain 47 / JCM 6285 / NBRC 100599)</name>
    <dbReference type="NCBI Taxonomy" id="358681"/>
    <lineage>
        <taxon>Bacteria</taxon>
        <taxon>Bacillati</taxon>
        <taxon>Bacillota</taxon>
        <taxon>Bacilli</taxon>
        <taxon>Bacillales</taxon>
        <taxon>Paenibacillaceae</taxon>
        <taxon>Brevibacillus</taxon>
    </lineage>
</organism>
<feature type="chain" id="PRO_1000192199" description="DNA mismatch repair protein MutS">
    <location>
        <begin position="1"/>
        <end position="862"/>
    </location>
</feature>
<feature type="binding site" evidence="1">
    <location>
        <begin position="604"/>
        <end position="611"/>
    </location>
    <ligand>
        <name>ATP</name>
        <dbReference type="ChEBI" id="CHEBI:30616"/>
    </ligand>
</feature>
<keyword id="KW-0067">ATP-binding</keyword>
<keyword id="KW-0227">DNA damage</keyword>
<keyword id="KW-0234">DNA repair</keyword>
<keyword id="KW-0238">DNA-binding</keyword>
<keyword id="KW-0547">Nucleotide-binding</keyword>
<keyword id="KW-1185">Reference proteome</keyword>
<proteinExistence type="inferred from homology"/>